<gene>
    <name evidence="1" type="primary">rplQ</name>
    <name type="ordered locus">CPS_0627</name>
</gene>
<reference key="1">
    <citation type="journal article" date="2005" name="Proc. Natl. Acad. Sci. U.S.A.">
        <title>The psychrophilic lifestyle as revealed by the genome sequence of Colwellia psychrerythraea 34H through genomic and proteomic analyses.</title>
        <authorList>
            <person name="Methe B.A."/>
            <person name="Nelson K.E."/>
            <person name="Deming J.W."/>
            <person name="Momen B."/>
            <person name="Melamud E."/>
            <person name="Zhang X."/>
            <person name="Moult J."/>
            <person name="Madupu R."/>
            <person name="Nelson W.C."/>
            <person name="Dodson R.J."/>
            <person name="Brinkac L.M."/>
            <person name="Daugherty S.C."/>
            <person name="Durkin A.S."/>
            <person name="DeBoy R.T."/>
            <person name="Kolonay J.F."/>
            <person name="Sullivan S.A."/>
            <person name="Zhou L."/>
            <person name="Davidsen T.M."/>
            <person name="Wu M."/>
            <person name="Huston A.L."/>
            <person name="Lewis M."/>
            <person name="Weaver B."/>
            <person name="Weidman J.F."/>
            <person name="Khouri H."/>
            <person name="Utterback T.R."/>
            <person name="Feldblyum T.V."/>
            <person name="Fraser C.M."/>
        </authorList>
    </citation>
    <scope>NUCLEOTIDE SEQUENCE [LARGE SCALE GENOMIC DNA]</scope>
    <source>
        <strain>34H / ATCC BAA-681</strain>
    </source>
</reference>
<dbReference type="EMBL" id="CP000083">
    <property type="protein sequence ID" value="AAZ25202.1"/>
    <property type="molecule type" value="Genomic_DNA"/>
</dbReference>
<dbReference type="RefSeq" id="WP_011041477.1">
    <property type="nucleotide sequence ID" value="NC_003910.7"/>
</dbReference>
<dbReference type="SMR" id="Q488Y7"/>
<dbReference type="STRING" id="167879.CPS_0627"/>
<dbReference type="KEGG" id="cps:CPS_0627"/>
<dbReference type="eggNOG" id="COG0203">
    <property type="taxonomic scope" value="Bacteria"/>
</dbReference>
<dbReference type="HOGENOM" id="CLU_074407_2_0_6"/>
<dbReference type="Proteomes" id="UP000000547">
    <property type="component" value="Chromosome"/>
</dbReference>
<dbReference type="GO" id="GO:0022625">
    <property type="term" value="C:cytosolic large ribosomal subunit"/>
    <property type="evidence" value="ECO:0007669"/>
    <property type="project" value="TreeGrafter"/>
</dbReference>
<dbReference type="GO" id="GO:0003735">
    <property type="term" value="F:structural constituent of ribosome"/>
    <property type="evidence" value="ECO:0007669"/>
    <property type="project" value="InterPro"/>
</dbReference>
<dbReference type="GO" id="GO:0006412">
    <property type="term" value="P:translation"/>
    <property type="evidence" value="ECO:0007669"/>
    <property type="project" value="UniProtKB-UniRule"/>
</dbReference>
<dbReference type="FunFam" id="3.90.1030.10:FF:000001">
    <property type="entry name" value="50S ribosomal protein L17"/>
    <property type="match status" value="1"/>
</dbReference>
<dbReference type="Gene3D" id="3.90.1030.10">
    <property type="entry name" value="Ribosomal protein L17"/>
    <property type="match status" value="1"/>
</dbReference>
<dbReference type="HAMAP" id="MF_01368">
    <property type="entry name" value="Ribosomal_bL17"/>
    <property type="match status" value="1"/>
</dbReference>
<dbReference type="InterPro" id="IPR000456">
    <property type="entry name" value="Ribosomal_bL17"/>
</dbReference>
<dbReference type="InterPro" id="IPR047859">
    <property type="entry name" value="Ribosomal_bL17_CS"/>
</dbReference>
<dbReference type="InterPro" id="IPR036373">
    <property type="entry name" value="Ribosomal_bL17_sf"/>
</dbReference>
<dbReference type="NCBIfam" id="TIGR00059">
    <property type="entry name" value="L17"/>
    <property type="match status" value="1"/>
</dbReference>
<dbReference type="PANTHER" id="PTHR14413:SF16">
    <property type="entry name" value="LARGE RIBOSOMAL SUBUNIT PROTEIN BL17M"/>
    <property type="match status" value="1"/>
</dbReference>
<dbReference type="PANTHER" id="PTHR14413">
    <property type="entry name" value="RIBOSOMAL PROTEIN L17"/>
    <property type="match status" value="1"/>
</dbReference>
<dbReference type="Pfam" id="PF01196">
    <property type="entry name" value="Ribosomal_L17"/>
    <property type="match status" value="1"/>
</dbReference>
<dbReference type="SUPFAM" id="SSF64263">
    <property type="entry name" value="Prokaryotic ribosomal protein L17"/>
    <property type="match status" value="1"/>
</dbReference>
<dbReference type="PROSITE" id="PS01167">
    <property type="entry name" value="RIBOSOMAL_L17"/>
    <property type="match status" value="1"/>
</dbReference>
<proteinExistence type="inferred from homology"/>
<evidence type="ECO:0000255" key="1">
    <source>
        <dbReference type="HAMAP-Rule" id="MF_01368"/>
    </source>
</evidence>
<evidence type="ECO:0000305" key="2"/>
<comment type="subunit">
    <text evidence="1">Part of the 50S ribosomal subunit. Contacts protein L32.</text>
</comment>
<comment type="similarity">
    <text evidence="1">Belongs to the bacterial ribosomal protein bL17 family.</text>
</comment>
<feature type="chain" id="PRO_1000055807" description="Large ribosomal subunit protein bL17">
    <location>
        <begin position="1"/>
        <end position="134"/>
    </location>
</feature>
<sequence>MRHRQSGRQLNRNSSHRQAMFRNMASSLVKHGVIKTTVAKAKELRRVLEPLITLAKTDSVANRRLAFARTQDKEVVGILFNELGARYQERPGGYTRILKCGFRTGDKAPMAYIELVDRPVVEDAPEVVEESAEA</sequence>
<protein>
    <recommendedName>
        <fullName evidence="1">Large ribosomal subunit protein bL17</fullName>
    </recommendedName>
    <alternativeName>
        <fullName evidence="2">50S ribosomal protein L17</fullName>
    </alternativeName>
</protein>
<keyword id="KW-0687">Ribonucleoprotein</keyword>
<keyword id="KW-0689">Ribosomal protein</keyword>
<name>RL17_COLP3</name>
<organism>
    <name type="scientific">Colwellia psychrerythraea (strain 34H / ATCC BAA-681)</name>
    <name type="common">Vibrio psychroerythus</name>
    <dbReference type="NCBI Taxonomy" id="167879"/>
    <lineage>
        <taxon>Bacteria</taxon>
        <taxon>Pseudomonadati</taxon>
        <taxon>Pseudomonadota</taxon>
        <taxon>Gammaproteobacteria</taxon>
        <taxon>Alteromonadales</taxon>
        <taxon>Colwelliaceae</taxon>
        <taxon>Colwellia</taxon>
    </lineage>
</organism>
<accession>Q488Y7</accession>